<comment type="function">
    <text evidence="1">Formation of pseudouridine at positions 38, 39 and 40 in the anticodon stem and loop of transfer RNAs.</text>
</comment>
<comment type="catalytic activity">
    <reaction evidence="1">
        <text>uridine(38/39/40) in tRNA = pseudouridine(38/39/40) in tRNA</text>
        <dbReference type="Rhea" id="RHEA:22376"/>
        <dbReference type="Rhea" id="RHEA-COMP:10085"/>
        <dbReference type="Rhea" id="RHEA-COMP:10087"/>
        <dbReference type="ChEBI" id="CHEBI:65314"/>
        <dbReference type="ChEBI" id="CHEBI:65315"/>
        <dbReference type="EC" id="5.4.99.12"/>
    </reaction>
</comment>
<comment type="subunit">
    <text evidence="1">Homodimer.</text>
</comment>
<comment type="similarity">
    <text evidence="1">Belongs to the tRNA pseudouridine synthase TruA family.</text>
</comment>
<organism>
    <name type="scientific">Actinobacillus pleuropneumoniae serotype 5b (strain L20)</name>
    <dbReference type="NCBI Taxonomy" id="416269"/>
    <lineage>
        <taxon>Bacteria</taxon>
        <taxon>Pseudomonadati</taxon>
        <taxon>Pseudomonadota</taxon>
        <taxon>Gammaproteobacteria</taxon>
        <taxon>Pasteurellales</taxon>
        <taxon>Pasteurellaceae</taxon>
        <taxon>Actinobacillus</taxon>
    </lineage>
</organism>
<sequence>MKIALGIEYDGSRYFGWQRQDEVESVQQKLEEALSIVANAPIEVFCAGRTDSGVHGTGQVVHFETQAIRPLQSWCFGTNANLPDDIAVKWAVEVSEDFHARFSATARRYRYIIFNNKLRSAILPKGVSHYHYALDHQKMHVAGQFLLGENDFSSFRAAKCQSHTPWRNVHHLNVSRLGNYIVVDIQANAFVHHMVRNIVESLIEVGQGRQPVEWIQWLLAQRDRTLAAPTAKAEGLYLVDVHYPERFGIPKTALGPLFLADN</sequence>
<gene>
    <name evidence="1" type="primary">truA</name>
    <name type="ordered locus">APL_0902</name>
</gene>
<accession>A3N0R2</accession>
<keyword id="KW-0413">Isomerase</keyword>
<keyword id="KW-1185">Reference proteome</keyword>
<keyword id="KW-0819">tRNA processing</keyword>
<reference key="1">
    <citation type="journal article" date="2008" name="J. Bacteriol.">
        <title>The complete genome sequence of Actinobacillus pleuropneumoniae L20 (serotype 5b).</title>
        <authorList>
            <person name="Foote S.J."/>
            <person name="Bosse J.T."/>
            <person name="Bouevitch A.B."/>
            <person name="Langford P.R."/>
            <person name="Young N.M."/>
            <person name="Nash J.H.E."/>
        </authorList>
    </citation>
    <scope>NUCLEOTIDE SEQUENCE [LARGE SCALE GENOMIC DNA]</scope>
    <source>
        <strain>L20</strain>
    </source>
</reference>
<name>TRUA_ACTP2</name>
<feature type="chain" id="PRO_1000017034" description="tRNA pseudouridine synthase A">
    <location>
        <begin position="1"/>
        <end position="262"/>
    </location>
</feature>
<feature type="active site" description="Nucleophile" evidence="1">
    <location>
        <position position="51"/>
    </location>
</feature>
<feature type="binding site" evidence="1">
    <location>
        <position position="109"/>
    </location>
    <ligand>
        <name>substrate</name>
    </ligand>
</feature>
<proteinExistence type="inferred from homology"/>
<protein>
    <recommendedName>
        <fullName evidence="1">tRNA pseudouridine synthase A</fullName>
        <ecNumber evidence="1">5.4.99.12</ecNumber>
    </recommendedName>
    <alternativeName>
        <fullName evidence="1">tRNA pseudouridine(38-40) synthase</fullName>
    </alternativeName>
    <alternativeName>
        <fullName evidence="1">tRNA pseudouridylate synthase I</fullName>
    </alternativeName>
    <alternativeName>
        <fullName evidence="1">tRNA-uridine isomerase I</fullName>
    </alternativeName>
</protein>
<evidence type="ECO:0000255" key="1">
    <source>
        <dbReference type="HAMAP-Rule" id="MF_00171"/>
    </source>
</evidence>
<dbReference type="EC" id="5.4.99.12" evidence="1"/>
<dbReference type="EMBL" id="CP000569">
    <property type="protein sequence ID" value="ABN73998.1"/>
    <property type="molecule type" value="Genomic_DNA"/>
</dbReference>
<dbReference type="RefSeq" id="WP_011848489.1">
    <property type="nucleotide sequence ID" value="NC_009053.1"/>
</dbReference>
<dbReference type="SMR" id="A3N0R2"/>
<dbReference type="STRING" id="416269.APL_0902"/>
<dbReference type="EnsemblBacteria" id="ABN73998">
    <property type="protein sequence ID" value="ABN73998"/>
    <property type="gene ID" value="APL_0902"/>
</dbReference>
<dbReference type="KEGG" id="apl:APL_0902"/>
<dbReference type="PATRIC" id="fig|416269.6.peg.940"/>
<dbReference type="eggNOG" id="COG0101">
    <property type="taxonomic scope" value="Bacteria"/>
</dbReference>
<dbReference type="HOGENOM" id="CLU_014673_0_2_6"/>
<dbReference type="Proteomes" id="UP000001432">
    <property type="component" value="Chromosome"/>
</dbReference>
<dbReference type="GO" id="GO:0003723">
    <property type="term" value="F:RNA binding"/>
    <property type="evidence" value="ECO:0007669"/>
    <property type="project" value="InterPro"/>
</dbReference>
<dbReference type="GO" id="GO:0160147">
    <property type="term" value="F:tRNA pseudouridine(38-40) synthase activity"/>
    <property type="evidence" value="ECO:0007669"/>
    <property type="project" value="UniProtKB-EC"/>
</dbReference>
<dbReference type="GO" id="GO:0031119">
    <property type="term" value="P:tRNA pseudouridine synthesis"/>
    <property type="evidence" value="ECO:0007669"/>
    <property type="project" value="UniProtKB-UniRule"/>
</dbReference>
<dbReference type="CDD" id="cd02570">
    <property type="entry name" value="PseudoU_synth_EcTruA"/>
    <property type="match status" value="1"/>
</dbReference>
<dbReference type="FunFam" id="3.30.70.580:FF:000001">
    <property type="entry name" value="tRNA pseudouridine synthase A"/>
    <property type="match status" value="1"/>
</dbReference>
<dbReference type="FunFam" id="3.30.70.660:FF:000001">
    <property type="entry name" value="tRNA pseudouridine synthase A"/>
    <property type="match status" value="1"/>
</dbReference>
<dbReference type="Gene3D" id="3.30.70.660">
    <property type="entry name" value="Pseudouridine synthase I, catalytic domain, C-terminal subdomain"/>
    <property type="match status" value="1"/>
</dbReference>
<dbReference type="Gene3D" id="3.30.70.580">
    <property type="entry name" value="Pseudouridine synthase I, catalytic domain, N-terminal subdomain"/>
    <property type="match status" value="1"/>
</dbReference>
<dbReference type="HAMAP" id="MF_00171">
    <property type="entry name" value="TruA"/>
    <property type="match status" value="1"/>
</dbReference>
<dbReference type="InterPro" id="IPR020103">
    <property type="entry name" value="PsdUridine_synth_cat_dom_sf"/>
</dbReference>
<dbReference type="InterPro" id="IPR001406">
    <property type="entry name" value="PsdUridine_synth_TruA"/>
</dbReference>
<dbReference type="InterPro" id="IPR020097">
    <property type="entry name" value="PsdUridine_synth_TruA_a/b_dom"/>
</dbReference>
<dbReference type="InterPro" id="IPR020095">
    <property type="entry name" value="PsdUridine_synth_TruA_C"/>
</dbReference>
<dbReference type="InterPro" id="IPR020094">
    <property type="entry name" value="TruA/RsuA/RluB/E/F_N"/>
</dbReference>
<dbReference type="NCBIfam" id="TIGR00071">
    <property type="entry name" value="hisT_truA"/>
    <property type="match status" value="1"/>
</dbReference>
<dbReference type="PANTHER" id="PTHR11142">
    <property type="entry name" value="PSEUDOURIDYLATE SYNTHASE"/>
    <property type="match status" value="1"/>
</dbReference>
<dbReference type="PANTHER" id="PTHR11142:SF0">
    <property type="entry name" value="TRNA PSEUDOURIDINE SYNTHASE-LIKE 1"/>
    <property type="match status" value="1"/>
</dbReference>
<dbReference type="Pfam" id="PF01416">
    <property type="entry name" value="PseudoU_synth_1"/>
    <property type="match status" value="2"/>
</dbReference>
<dbReference type="PIRSF" id="PIRSF001430">
    <property type="entry name" value="tRNA_psdUrid_synth"/>
    <property type="match status" value="1"/>
</dbReference>
<dbReference type="SUPFAM" id="SSF55120">
    <property type="entry name" value="Pseudouridine synthase"/>
    <property type="match status" value="1"/>
</dbReference>